<comment type="similarity">
    <text evidence="1">Belongs to the UPF0260 family.</text>
</comment>
<name>Y2368_ENT38</name>
<proteinExistence type="inferred from homology"/>
<gene>
    <name type="ordered locus">Ent638_2368</name>
</gene>
<organism>
    <name type="scientific">Enterobacter sp. (strain 638)</name>
    <dbReference type="NCBI Taxonomy" id="399742"/>
    <lineage>
        <taxon>Bacteria</taxon>
        <taxon>Pseudomonadati</taxon>
        <taxon>Pseudomonadota</taxon>
        <taxon>Gammaproteobacteria</taxon>
        <taxon>Enterobacterales</taxon>
        <taxon>Enterobacteriaceae</taxon>
        <taxon>Enterobacter</taxon>
    </lineage>
</organism>
<reference key="1">
    <citation type="journal article" date="2010" name="PLoS Genet.">
        <title>Genome sequence of the plant growth promoting endophytic bacterium Enterobacter sp. 638.</title>
        <authorList>
            <person name="Taghavi S."/>
            <person name="van der Lelie D."/>
            <person name="Hoffman A."/>
            <person name="Zhang Y.B."/>
            <person name="Walla M.D."/>
            <person name="Vangronsveld J."/>
            <person name="Newman L."/>
            <person name="Monchy S."/>
        </authorList>
    </citation>
    <scope>NUCLEOTIDE SEQUENCE [LARGE SCALE GENOMIC DNA]</scope>
    <source>
        <strain>638</strain>
    </source>
</reference>
<evidence type="ECO:0000255" key="1">
    <source>
        <dbReference type="HAMAP-Rule" id="MF_00676"/>
    </source>
</evidence>
<accession>A4WBF7</accession>
<protein>
    <recommendedName>
        <fullName evidence="1">UPF0260 protein Ent638_2368</fullName>
    </recommendedName>
</protein>
<dbReference type="EMBL" id="CP000653">
    <property type="protein sequence ID" value="ABP61037.1"/>
    <property type="molecule type" value="Genomic_DNA"/>
</dbReference>
<dbReference type="RefSeq" id="WP_012017751.1">
    <property type="nucleotide sequence ID" value="NC_009436.1"/>
</dbReference>
<dbReference type="STRING" id="399742.Ent638_2368"/>
<dbReference type="KEGG" id="ent:Ent638_2368"/>
<dbReference type="eggNOG" id="COG2983">
    <property type="taxonomic scope" value="Bacteria"/>
</dbReference>
<dbReference type="HOGENOM" id="CLU_109769_0_1_6"/>
<dbReference type="OrthoDB" id="9786855at2"/>
<dbReference type="Proteomes" id="UP000000230">
    <property type="component" value="Chromosome"/>
</dbReference>
<dbReference type="HAMAP" id="MF_00676">
    <property type="entry name" value="UPF0260"/>
    <property type="match status" value="1"/>
</dbReference>
<dbReference type="InterPro" id="IPR005358">
    <property type="entry name" value="Puta_zinc/iron-chelating_dom"/>
</dbReference>
<dbReference type="InterPro" id="IPR008228">
    <property type="entry name" value="UCP006173"/>
</dbReference>
<dbReference type="NCBIfam" id="NF003498">
    <property type="entry name" value="PRK05170.1-1"/>
    <property type="match status" value="1"/>
</dbReference>
<dbReference type="NCBIfam" id="NF003501">
    <property type="entry name" value="PRK05170.1-5"/>
    <property type="match status" value="1"/>
</dbReference>
<dbReference type="NCBIfam" id="NF003503">
    <property type="entry name" value="PRK05170.2-1"/>
    <property type="match status" value="1"/>
</dbReference>
<dbReference type="NCBIfam" id="NF003507">
    <property type="entry name" value="PRK05170.2-5"/>
    <property type="match status" value="1"/>
</dbReference>
<dbReference type="PANTHER" id="PTHR37421">
    <property type="entry name" value="UPF0260 PROTEIN YCGN"/>
    <property type="match status" value="1"/>
</dbReference>
<dbReference type="PANTHER" id="PTHR37421:SF1">
    <property type="entry name" value="UPF0260 PROTEIN YCGN"/>
    <property type="match status" value="1"/>
</dbReference>
<dbReference type="Pfam" id="PF03692">
    <property type="entry name" value="CxxCxxCC"/>
    <property type="match status" value="1"/>
</dbReference>
<dbReference type="PIRSF" id="PIRSF006173">
    <property type="entry name" value="UCP006173"/>
    <property type="match status" value="1"/>
</dbReference>
<feature type="chain" id="PRO_1000061956" description="UPF0260 protein Ent638_2368">
    <location>
        <begin position="1"/>
        <end position="147"/>
    </location>
</feature>
<sequence length="147" mass="17302">MSEIPFWQSKTLDEMTDVQWESLCDGCGQCCLHKLMDEDSDEIYFTNVACKQLNIKTCQCRNYERRFEYEPDCIKLTRDNLPTFEWLPHTCAYRLLAEGKGLPTWHPLLTGSKVEMHGERISVRHIAVKESEVQDWEDHILNHPKRA</sequence>